<organism>
    <name type="scientific">Mycosarcoma maydis</name>
    <name type="common">Corn smut fungus</name>
    <name type="synonym">Ustilago maydis</name>
    <dbReference type="NCBI Taxonomy" id="5270"/>
    <lineage>
        <taxon>Eukaryota</taxon>
        <taxon>Fungi</taxon>
        <taxon>Dikarya</taxon>
        <taxon>Basidiomycota</taxon>
        <taxon>Ustilaginomycotina</taxon>
        <taxon>Ustilaginomycetes</taxon>
        <taxon>Ustilaginales</taxon>
        <taxon>Ustilaginaceae</taxon>
        <taxon>Mycosarcoma</taxon>
    </lineage>
</organism>
<keyword id="KW-0156">Chromatin regulator</keyword>
<keyword id="KW-0175">Coiled coil</keyword>
<keyword id="KW-0479">Metal-binding</keyword>
<keyword id="KW-0539">Nucleus</keyword>
<keyword id="KW-1185">Reference proteome</keyword>
<keyword id="KW-0808">Transferase</keyword>
<keyword id="KW-0833">Ubl conjugation pathway</keyword>
<keyword id="KW-0862">Zinc</keyword>
<keyword id="KW-0863">Zinc-finger</keyword>
<feature type="chain" id="PRO_0000245303" description="E3 ubiquitin-protein ligase BRE1">
    <location>
        <begin position="1"/>
        <end position="817"/>
    </location>
</feature>
<feature type="zinc finger region" description="RING-type" evidence="3">
    <location>
        <begin position="764"/>
        <end position="803"/>
    </location>
</feature>
<feature type="region of interest" description="Disordered" evidence="4">
    <location>
        <begin position="1"/>
        <end position="48"/>
    </location>
</feature>
<feature type="region of interest" description="Disordered" evidence="4">
    <location>
        <begin position="497"/>
        <end position="534"/>
    </location>
</feature>
<feature type="region of interest" description="Disordered" evidence="4">
    <location>
        <begin position="730"/>
        <end position="750"/>
    </location>
</feature>
<feature type="coiled-coil region" evidence="2">
    <location>
        <begin position="160"/>
        <end position="222"/>
    </location>
</feature>
<feature type="coiled-coil region" evidence="2">
    <location>
        <begin position="265"/>
        <end position="505"/>
    </location>
</feature>
<feature type="coiled-coil region" evidence="2">
    <location>
        <begin position="532"/>
        <end position="579"/>
    </location>
</feature>
<feature type="coiled-coil region" evidence="2">
    <location>
        <begin position="658"/>
        <end position="739"/>
    </location>
</feature>
<feature type="compositionally biased region" description="Basic and acidic residues" evidence="4">
    <location>
        <begin position="21"/>
        <end position="33"/>
    </location>
</feature>
<feature type="compositionally biased region" description="Polar residues" evidence="4">
    <location>
        <begin position="502"/>
        <end position="512"/>
    </location>
</feature>
<feature type="compositionally biased region" description="Basic and acidic residues" evidence="4">
    <location>
        <begin position="514"/>
        <end position="529"/>
    </location>
</feature>
<gene>
    <name type="primary">BRE1</name>
    <name type="ORF">UMAG_05186</name>
</gene>
<dbReference type="EC" id="2.3.2.27" evidence="1"/>
<dbReference type="EMBL" id="CM003143">
    <property type="protein sequence ID" value="KIS70114.1"/>
    <property type="molecule type" value="Genomic_DNA"/>
</dbReference>
<dbReference type="RefSeq" id="XP_011388235.1">
    <property type="nucleotide sequence ID" value="XM_011389933.1"/>
</dbReference>
<dbReference type="SMR" id="Q4P3X7"/>
<dbReference type="FunCoup" id="Q4P3X7">
    <property type="interactions" value="215"/>
</dbReference>
<dbReference type="STRING" id="237631.Q4P3X7"/>
<dbReference type="EnsemblFungi" id="KIS70114">
    <property type="protein sequence ID" value="KIS70114"/>
    <property type="gene ID" value="UMAG_05186"/>
</dbReference>
<dbReference type="GeneID" id="23565145"/>
<dbReference type="KEGG" id="uma:UMAG_05186"/>
<dbReference type="VEuPathDB" id="FungiDB:UMAG_05186"/>
<dbReference type="eggNOG" id="KOG0978">
    <property type="taxonomic scope" value="Eukaryota"/>
</dbReference>
<dbReference type="HOGENOM" id="CLU_019713_0_0_1"/>
<dbReference type="InParanoid" id="Q4P3X7"/>
<dbReference type="OMA" id="YRQMQEY"/>
<dbReference type="OrthoDB" id="10266039at2759"/>
<dbReference type="UniPathway" id="UPA00143"/>
<dbReference type="Proteomes" id="UP000000561">
    <property type="component" value="Chromosome 4"/>
</dbReference>
<dbReference type="GO" id="GO:0033503">
    <property type="term" value="C:HULC complex"/>
    <property type="evidence" value="ECO:0000318"/>
    <property type="project" value="GO_Central"/>
</dbReference>
<dbReference type="GO" id="GO:0005634">
    <property type="term" value="C:nucleus"/>
    <property type="evidence" value="ECO:0000318"/>
    <property type="project" value="GO_Central"/>
</dbReference>
<dbReference type="GO" id="GO:0061630">
    <property type="term" value="F:ubiquitin protein ligase activity"/>
    <property type="evidence" value="ECO:0000318"/>
    <property type="project" value="GO_Central"/>
</dbReference>
<dbReference type="GO" id="GO:0008270">
    <property type="term" value="F:zinc ion binding"/>
    <property type="evidence" value="ECO:0007669"/>
    <property type="project" value="UniProtKB-KW"/>
</dbReference>
<dbReference type="GO" id="GO:0006325">
    <property type="term" value="P:chromatin organization"/>
    <property type="evidence" value="ECO:0007669"/>
    <property type="project" value="UniProtKB-KW"/>
</dbReference>
<dbReference type="GO" id="GO:0016567">
    <property type="term" value="P:protein ubiquitination"/>
    <property type="evidence" value="ECO:0007669"/>
    <property type="project" value="UniProtKB-UniPathway"/>
</dbReference>
<dbReference type="CDD" id="cd16499">
    <property type="entry name" value="RING-HC_Bre1-like"/>
    <property type="match status" value="1"/>
</dbReference>
<dbReference type="Gene3D" id="3.30.40.10">
    <property type="entry name" value="Zinc/RING finger domain, C3HC4 (zinc finger)"/>
    <property type="match status" value="1"/>
</dbReference>
<dbReference type="InterPro" id="IPR013956">
    <property type="entry name" value="E3_ubiquit_lig_Bre1"/>
</dbReference>
<dbReference type="InterPro" id="IPR018957">
    <property type="entry name" value="Znf_C3HC4_RING-type"/>
</dbReference>
<dbReference type="InterPro" id="IPR001841">
    <property type="entry name" value="Znf_RING"/>
</dbReference>
<dbReference type="InterPro" id="IPR013083">
    <property type="entry name" value="Znf_RING/FYVE/PHD"/>
</dbReference>
<dbReference type="InterPro" id="IPR017907">
    <property type="entry name" value="Znf_RING_CS"/>
</dbReference>
<dbReference type="PANTHER" id="PTHR23163:SF0">
    <property type="entry name" value="E3 UBIQUITIN-PROTEIN LIGASE BRE1"/>
    <property type="match status" value="1"/>
</dbReference>
<dbReference type="PANTHER" id="PTHR23163">
    <property type="entry name" value="RING FINGER PROTEIN-RELATED"/>
    <property type="match status" value="1"/>
</dbReference>
<dbReference type="Pfam" id="PF08647">
    <property type="entry name" value="BRE1"/>
    <property type="match status" value="1"/>
</dbReference>
<dbReference type="Pfam" id="PF00097">
    <property type="entry name" value="zf-C3HC4"/>
    <property type="match status" value="1"/>
</dbReference>
<dbReference type="SMART" id="SM00184">
    <property type="entry name" value="RING"/>
    <property type="match status" value="1"/>
</dbReference>
<dbReference type="SUPFAM" id="SSF57850">
    <property type="entry name" value="RING/U-box"/>
    <property type="match status" value="1"/>
</dbReference>
<dbReference type="PROSITE" id="PS00518">
    <property type="entry name" value="ZF_RING_1"/>
    <property type="match status" value="1"/>
</dbReference>
<dbReference type="PROSITE" id="PS50089">
    <property type="entry name" value="ZF_RING_2"/>
    <property type="match status" value="1"/>
</dbReference>
<evidence type="ECO:0000250" key="1">
    <source>
        <dbReference type="UniProtKB" id="Q07457"/>
    </source>
</evidence>
<evidence type="ECO:0000255" key="2"/>
<evidence type="ECO:0000255" key="3">
    <source>
        <dbReference type="PROSITE-ProRule" id="PRU00175"/>
    </source>
</evidence>
<evidence type="ECO:0000256" key="4">
    <source>
        <dbReference type="SAM" id="MobiDB-lite"/>
    </source>
</evidence>
<evidence type="ECO:0000305" key="5"/>
<reference key="1">
    <citation type="journal article" date="2006" name="Nature">
        <title>Insights from the genome of the biotrophic fungal plant pathogen Ustilago maydis.</title>
        <authorList>
            <person name="Kaemper J."/>
            <person name="Kahmann R."/>
            <person name="Boelker M."/>
            <person name="Ma L.-J."/>
            <person name="Brefort T."/>
            <person name="Saville B.J."/>
            <person name="Banuett F."/>
            <person name="Kronstad J.W."/>
            <person name="Gold S.E."/>
            <person name="Mueller O."/>
            <person name="Perlin M.H."/>
            <person name="Woesten H.A.B."/>
            <person name="de Vries R."/>
            <person name="Ruiz-Herrera J."/>
            <person name="Reynaga-Pena C.G."/>
            <person name="Snetselaar K."/>
            <person name="McCann M."/>
            <person name="Perez-Martin J."/>
            <person name="Feldbruegge M."/>
            <person name="Basse C.W."/>
            <person name="Steinberg G."/>
            <person name="Ibeas J.I."/>
            <person name="Holloman W."/>
            <person name="Guzman P."/>
            <person name="Farman M.L."/>
            <person name="Stajich J.E."/>
            <person name="Sentandreu R."/>
            <person name="Gonzalez-Prieto J.M."/>
            <person name="Kennell J.C."/>
            <person name="Molina L."/>
            <person name="Schirawski J."/>
            <person name="Mendoza-Mendoza A."/>
            <person name="Greilinger D."/>
            <person name="Muench K."/>
            <person name="Roessel N."/>
            <person name="Scherer M."/>
            <person name="Vranes M."/>
            <person name="Ladendorf O."/>
            <person name="Vincon V."/>
            <person name="Fuchs U."/>
            <person name="Sandrock B."/>
            <person name="Meng S."/>
            <person name="Ho E.C.H."/>
            <person name="Cahill M.J."/>
            <person name="Boyce K.J."/>
            <person name="Klose J."/>
            <person name="Klosterman S.J."/>
            <person name="Deelstra H.J."/>
            <person name="Ortiz-Castellanos L."/>
            <person name="Li W."/>
            <person name="Sanchez-Alonso P."/>
            <person name="Schreier P.H."/>
            <person name="Haeuser-Hahn I."/>
            <person name="Vaupel M."/>
            <person name="Koopmann E."/>
            <person name="Friedrich G."/>
            <person name="Voss H."/>
            <person name="Schlueter T."/>
            <person name="Margolis J."/>
            <person name="Platt D."/>
            <person name="Swimmer C."/>
            <person name="Gnirke A."/>
            <person name="Chen F."/>
            <person name="Vysotskaia V."/>
            <person name="Mannhaupt G."/>
            <person name="Gueldener U."/>
            <person name="Muensterkoetter M."/>
            <person name="Haase D."/>
            <person name="Oesterheld M."/>
            <person name="Mewes H.-W."/>
            <person name="Mauceli E.W."/>
            <person name="DeCaprio D."/>
            <person name="Wade C.M."/>
            <person name="Butler J."/>
            <person name="Young S.K."/>
            <person name="Jaffe D.B."/>
            <person name="Calvo S.E."/>
            <person name="Nusbaum C."/>
            <person name="Galagan J.E."/>
            <person name="Birren B.W."/>
        </authorList>
    </citation>
    <scope>NUCLEOTIDE SEQUENCE [LARGE SCALE GENOMIC DNA]</scope>
    <source>
        <strain>DSM 14603 / FGSC 9021 / UM521</strain>
    </source>
</reference>
<reference key="2">
    <citation type="submission" date="2014-09" db="EMBL/GenBank/DDBJ databases">
        <authorList>
            <person name="Gueldener U."/>
            <person name="Muensterkoetter M."/>
            <person name="Walter M.C."/>
            <person name="Mannhaupt G."/>
            <person name="Kahmann R."/>
        </authorList>
    </citation>
    <scope>GENOME REANNOTATION</scope>
    <source>
        <strain>DSM 14603 / FGSC 9021 / UM521</strain>
    </source>
</reference>
<proteinExistence type="inferred from homology"/>
<comment type="function">
    <text evidence="1">E3 ubiquitin-protein ligase that mediates monoubiquitination of histone H2B to form H2BK123ub1. H2BK123ub1 gives a specific tag for epigenetic transcriptional activation and is also a prerequisite for H3K4me and H3K79me formation.</text>
</comment>
<comment type="catalytic activity">
    <reaction evidence="1">
        <text>S-ubiquitinyl-[E2 ubiquitin-conjugating enzyme]-L-cysteine + [acceptor protein]-L-lysine = [E2 ubiquitin-conjugating enzyme]-L-cysteine + N(6)-ubiquitinyl-[acceptor protein]-L-lysine.</text>
        <dbReference type="EC" id="2.3.2.27"/>
    </reaction>
</comment>
<comment type="pathway">
    <text>Protein modification; protein ubiquitination.</text>
</comment>
<comment type="subcellular location">
    <subcellularLocation>
        <location evidence="1">Nucleus</location>
    </subcellularLocation>
</comment>
<comment type="similarity">
    <text evidence="5">Belongs to the BRE1 family.</text>
</comment>
<protein>
    <recommendedName>
        <fullName>E3 ubiquitin-protein ligase BRE1</fullName>
        <ecNumber evidence="1">2.3.2.27</ecNumber>
    </recommendedName>
    <alternativeName>
        <fullName evidence="5">RING-type E3 ubiquitin transferase BRE1</fullName>
    </alternativeName>
</protein>
<name>BRE1_MYCMD</name>
<sequence>MLQSMSGADDRKRALTGTVEDGPRKRLHSDEATSKSAATPTNDNEDDEALHPAYAGLEAFRKEAIYRKLLEARRDLQRIERRAGTFQDDLAVSEQRAAVLQRFWNLLLTELAARLAIQDQDVFALSSASDSRSDLTAMEQQLEQQSSAVLRCLSQQGDVNIVELQQKLHDLADEGSRYKQDLFLTQSKLQRAQDALAQTSQKLSKVEHEYVRYQSNLLRATEGKPTIPAGTIVSASEPAPATEQTADTAVKKETATLAPTDGAPHTSETLQKAVDELESARQDVELTRRESDSRYAEIQTLNEEVRTLKCKLHETQTKLTTLPEEVLLSSALYRELQTLLRNAQQDLQSSKEAMQALETEATALREDRAAFQQTVEAEAASRSEDLEKLIKAKEADVTRLRSQRDELNAELTERRSREQVKFTQIEEMKALLNSKEERLILLSSQVRRLRMAVAAFHGQSAGVSALATAESEEDQFEQVSRAAQQAQARVAELEQRLGVAGQNASPNGTGATAKTEKGADVDTKAEKSVEAASESELQGEIQRLRLSLQAAEASSKAVDDELEKISAAYADLERQASVKVTDVSRMEEKALRWVTEKSKADNKYFSAMRAKDAVDAELRTAKQVHERQQKTIEAFADVERNYVVQSGLHEKAISTFKKVTDAQTHRIETLQRELELAESRLTELARVKEVASDSAKELINTANLEKDQRKRAEERIVRLEKDLESSKRQLAKAAASAAKNKGRRDADAGDGASEKDFLNALLQCSSCKERYRNRILTKCYHTFCSECIDSRVQTRQRKCPHCALAFAVSDVQPLYLQ</sequence>
<accession>Q4P3X7</accession>
<accession>A0A0D1E1X2</accession>